<name>5DNU_ECOBW</name>
<evidence type="ECO:0000255" key="1">
    <source>
        <dbReference type="HAMAP-Rule" id="MF_01100"/>
    </source>
</evidence>
<evidence type="ECO:0000255" key="2">
    <source>
        <dbReference type="PROSITE-ProRule" id="PRU01175"/>
    </source>
</evidence>
<proteinExistence type="inferred from homology"/>
<comment type="function">
    <text evidence="1">Catalyzes the strictly specific dephosphorylation of 2'-deoxyribonucleoside 5'-monophosphates.</text>
</comment>
<comment type="catalytic activity">
    <reaction evidence="1">
        <text>a 2'-deoxyribonucleoside 5'-phosphate + H2O = a 2'-deoxyribonucleoside + phosphate</text>
        <dbReference type="Rhea" id="RHEA:36167"/>
        <dbReference type="ChEBI" id="CHEBI:15377"/>
        <dbReference type="ChEBI" id="CHEBI:18274"/>
        <dbReference type="ChEBI" id="CHEBI:43474"/>
        <dbReference type="ChEBI" id="CHEBI:65317"/>
        <dbReference type="EC" id="3.1.3.89"/>
    </reaction>
</comment>
<comment type="cofactor">
    <cofactor evidence="1">
        <name>a divalent metal cation</name>
        <dbReference type="ChEBI" id="CHEBI:60240"/>
    </cofactor>
</comment>
<comment type="subunit">
    <text evidence="1">Homodimer.</text>
</comment>
<comment type="subcellular location">
    <subcellularLocation>
        <location evidence="1">Cytoplasm</location>
    </subcellularLocation>
</comment>
<comment type="similarity">
    <text evidence="1">Belongs to the 5DNU family.</text>
</comment>
<gene>
    <name evidence="1" type="primary">yfbR</name>
    <name type="ordered locus">BWG_2065</name>
</gene>
<keyword id="KW-0963">Cytoplasm</keyword>
<keyword id="KW-0378">Hydrolase</keyword>
<keyword id="KW-0479">Metal-binding</keyword>
<keyword id="KW-0547">Nucleotide-binding</keyword>
<protein>
    <recommendedName>
        <fullName evidence="1">5'-deoxynucleotidase YfbR</fullName>
        <ecNumber evidence="1">3.1.3.89</ecNumber>
    </recommendedName>
    <alternativeName>
        <fullName evidence="1">5'-deoxyribonucleotidase</fullName>
    </alternativeName>
    <alternativeName>
        <fullName evidence="1">Nucleoside 5'-monophosphate phosphohydrolase</fullName>
    </alternativeName>
</protein>
<sequence length="199" mass="22708">MKQSHFFAHLSRLKLINRWPLMRNVRTENVSEHSLQVAMVAHALAAIKNRKFGGNVNAERIALLAMYHDASEVLTGDLPTPVKYFNSQIAQEYKAIEKIAQQKLVDMVPEELRDIFAPLIDEHAYSDEEKSLVKQADALCAYLKCLEELAAGNNEFLLAKTRLEATLEARRSQEMDYFMEIFVPSFHLSLDEISQDSPL</sequence>
<organism>
    <name type="scientific">Escherichia coli (strain K12 / MC4100 / BW2952)</name>
    <dbReference type="NCBI Taxonomy" id="595496"/>
    <lineage>
        <taxon>Bacteria</taxon>
        <taxon>Pseudomonadati</taxon>
        <taxon>Pseudomonadota</taxon>
        <taxon>Gammaproteobacteria</taxon>
        <taxon>Enterobacterales</taxon>
        <taxon>Enterobacteriaceae</taxon>
        <taxon>Escherichia</taxon>
    </lineage>
</organism>
<accession>C4ZVI4</accession>
<reference key="1">
    <citation type="journal article" date="2009" name="J. Bacteriol.">
        <title>Genomic sequencing reveals regulatory mutations and recombinational events in the widely used MC4100 lineage of Escherichia coli K-12.</title>
        <authorList>
            <person name="Ferenci T."/>
            <person name="Zhou Z."/>
            <person name="Betteridge T."/>
            <person name="Ren Y."/>
            <person name="Liu Y."/>
            <person name="Feng L."/>
            <person name="Reeves P.R."/>
            <person name="Wang L."/>
        </authorList>
    </citation>
    <scope>NUCLEOTIDE SEQUENCE [LARGE SCALE GENOMIC DNA]</scope>
    <source>
        <strain>K12 / MC4100 / BW2952</strain>
    </source>
</reference>
<feature type="chain" id="PRO_1000213543" description="5'-deoxynucleotidase YfbR">
    <location>
        <begin position="1"/>
        <end position="199"/>
    </location>
</feature>
<feature type="domain" description="HD" evidence="2">
    <location>
        <begin position="30"/>
        <end position="142"/>
    </location>
</feature>
<feature type="binding site" evidence="1">
    <location>
        <begin position="18"/>
        <end position="19"/>
    </location>
    <ligand>
        <name>substrate</name>
    </ligand>
</feature>
<feature type="binding site" evidence="1">
    <location>
        <position position="33"/>
    </location>
    <ligand>
        <name>a divalent metal cation</name>
        <dbReference type="ChEBI" id="CHEBI:60240"/>
    </ligand>
</feature>
<feature type="binding site" evidence="1">
    <location>
        <position position="33"/>
    </location>
    <ligand>
        <name>substrate</name>
    </ligand>
</feature>
<feature type="binding site" evidence="1">
    <location>
        <position position="68"/>
    </location>
    <ligand>
        <name>a divalent metal cation</name>
        <dbReference type="ChEBI" id="CHEBI:60240"/>
    </ligand>
</feature>
<feature type="binding site" evidence="1">
    <location>
        <position position="69"/>
    </location>
    <ligand>
        <name>a divalent metal cation</name>
        <dbReference type="ChEBI" id="CHEBI:60240"/>
    </ligand>
</feature>
<feature type="binding site" evidence="1">
    <location>
        <position position="69"/>
    </location>
    <ligand>
        <name>substrate</name>
    </ligand>
</feature>
<feature type="binding site" evidence="1">
    <location>
        <begin position="77"/>
        <end position="80"/>
    </location>
    <ligand>
        <name>substrate</name>
    </ligand>
</feature>
<feature type="binding site" evidence="1">
    <location>
        <position position="137"/>
    </location>
    <ligand>
        <name>a divalent metal cation</name>
        <dbReference type="ChEBI" id="CHEBI:60240"/>
    </ligand>
</feature>
<feature type="binding site" evidence="1">
    <location>
        <position position="137"/>
    </location>
    <ligand>
        <name>substrate</name>
    </ligand>
</feature>
<feature type="site" description="Appears to be important in orienting the phosphate for catalysis" evidence="1">
    <location>
        <position position="18"/>
    </location>
</feature>
<dbReference type="EC" id="3.1.3.89" evidence="1"/>
<dbReference type="EMBL" id="CP001396">
    <property type="protein sequence ID" value="ACR62745.1"/>
    <property type="molecule type" value="Genomic_DNA"/>
</dbReference>
<dbReference type="RefSeq" id="WP_000813859.1">
    <property type="nucleotide sequence ID" value="NC_012759.1"/>
</dbReference>
<dbReference type="SMR" id="C4ZVI4"/>
<dbReference type="KEGG" id="ebw:BWG_2065"/>
<dbReference type="HOGENOM" id="CLU_084784_0_0_6"/>
<dbReference type="GO" id="GO:0005737">
    <property type="term" value="C:cytoplasm"/>
    <property type="evidence" value="ECO:0007669"/>
    <property type="project" value="UniProtKB-SubCell"/>
</dbReference>
<dbReference type="GO" id="GO:0002953">
    <property type="term" value="F:5'-deoxynucleotidase activity"/>
    <property type="evidence" value="ECO:0007669"/>
    <property type="project" value="UniProtKB-EC"/>
</dbReference>
<dbReference type="GO" id="GO:0046872">
    <property type="term" value="F:metal ion binding"/>
    <property type="evidence" value="ECO:0007669"/>
    <property type="project" value="UniProtKB-KW"/>
</dbReference>
<dbReference type="GO" id="GO:0000166">
    <property type="term" value="F:nucleotide binding"/>
    <property type="evidence" value="ECO:0007669"/>
    <property type="project" value="UniProtKB-KW"/>
</dbReference>
<dbReference type="CDD" id="cd00077">
    <property type="entry name" value="HDc"/>
    <property type="match status" value="1"/>
</dbReference>
<dbReference type="FunFam" id="1.10.3210.10:FF:000002">
    <property type="entry name" value="Nucleotidase YfbR"/>
    <property type="match status" value="1"/>
</dbReference>
<dbReference type="Gene3D" id="1.10.3210.10">
    <property type="entry name" value="Hypothetical protein af1432"/>
    <property type="match status" value="1"/>
</dbReference>
<dbReference type="HAMAP" id="MF_01100">
    <property type="entry name" value="5DNU"/>
    <property type="match status" value="1"/>
</dbReference>
<dbReference type="InterPro" id="IPR003607">
    <property type="entry name" value="HD/PDEase_dom"/>
</dbReference>
<dbReference type="InterPro" id="IPR006674">
    <property type="entry name" value="HD_domain"/>
</dbReference>
<dbReference type="InterPro" id="IPR022971">
    <property type="entry name" value="YfbR"/>
</dbReference>
<dbReference type="InterPro" id="IPR039356">
    <property type="entry name" value="YfbR/HDDC2"/>
</dbReference>
<dbReference type="NCBIfam" id="NF003009">
    <property type="entry name" value="PRK03826.1"/>
    <property type="match status" value="1"/>
</dbReference>
<dbReference type="PANTHER" id="PTHR11845">
    <property type="entry name" value="5'-DEOXYNUCLEOTIDASE HDDC2"/>
    <property type="match status" value="1"/>
</dbReference>
<dbReference type="PANTHER" id="PTHR11845:SF13">
    <property type="entry name" value="5'-DEOXYNUCLEOTIDASE HDDC2"/>
    <property type="match status" value="1"/>
</dbReference>
<dbReference type="Pfam" id="PF12917">
    <property type="entry name" value="YfbR-like"/>
    <property type="match status" value="1"/>
</dbReference>
<dbReference type="SMART" id="SM00471">
    <property type="entry name" value="HDc"/>
    <property type="match status" value="1"/>
</dbReference>
<dbReference type="SUPFAM" id="SSF109604">
    <property type="entry name" value="HD-domain/PDEase-like"/>
    <property type="match status" value="1"/>
</dbReference>
<dbReference type="PROSITE" id="PS51831">
    <property type="entry name" value="HD"/>
    <property type="match status" value="1"/>
</dbReference>